<protein>
    <recommendedName>
        <fullName evidence="1">Protease HtpX</fullName>
        <ecNumber evidence="1">3.4.24.-</ecNumber>
    </recommendedName>
    <alternativeName>
        <fullName evidence="1">Heat shock protein HtpX</fullName>
    </alternativeName>
</protein>
<evidence type="ECO:0000255" key="1">
    <source>
        <dbReference type="HAMAP-Rule" id="MF_00188"/>
    </source>
</evidence>
<name>HTPX_XYLFT</name>
<organism>
    <name type="scientific">Xylella fastidiosa (strain Temecula1 / ATCC 700964)</name>
    <dbReference type="NCBI Taxonomy" id="183190"/>
    <lineage>
        <taxon>Bacteria</taxon>
        <taxon>Pseudomonadati</taxon>
        <taxon>Pseudomonadota</taxon>
        <taxon>Gammaproteobacteria</taxon>
        <taxon>Lysobacterales</taxon>
        <taxon>Lysobacteraceae</taxon>
        <taxon>Xylella</taxon>
    </lineage>
</organism>
<feature type="chain" id="PRO_0000138910" description="Protease HtpX">
    <location>
        <begin position="1"/>
        <end position="289"/>
    </location>
</feature>
<feature type="transmembrane region" description="Helical" evidence="1">
    <location>
        <begin position="5"/>
        <end position="25"/>
    </location>
</feature>
<feature type="transmembrane region" description="Helical" evidence="1">
    <location>
        <begin position="33"/>
        <end position="53"/>
    </location>
</feature>
<feature type="transmembrane region" description="Helical" evidence="1">
    <location>
        <begin position="155"/>
        <end position="175"/>
    </location>
</feature>
<feature type="transmembrane region" description="Helical" evidence="1">
    <location>
        <begin position="193"/>
        <end position="213"/>
    </location>
</feature>
<feature type="active site" evidence="1">
    <location>
        <position position="141"/>
    </location>
</feature>
<feature type="binding site" evidence="1">
    <location>
        <position position="140"/>
    </location>
    <ligand>
        <name>Zn(2+)</name>
        <dbReference type="ChEBI" id="CHEBI:29105"/>
        <note>catalytic</note>
    </ligand>
</feature>
<feature type="binding site" evidence="1">
    <location>
        <position position="144"/>
    </location>
    <ligand>
        <name>Zn(2+)</name>
        <dbReference type="ChEBI" id="CHEBI:29105"/>
        <note>catalytic</note>
    </ligand>
</feature>
<feature type="binding site" evidence="1">
    <location>
        <position position="218"/>
    </location>
    <ligand>
        <name>Zn(2+)</name>
        <dbReference type="ChEBI" id="CHEBI:29105"/>
        <note>catalytic</note>
    </ligand>
</feature>
<dbReference type="EC" id="3.4.24.-" evidence="1"/>
<dbReference type="EMBL" id="AE009442">
    <property type="protein sequence ID" value="AAO29824.1"/>
    <property type="molecule type" value="Genomic_DNA"/>
</dbReference>
<dbReference type="RefSeq" id="WP_004087571.1">
    <property type="nucleotide sequence ID" value="NC_004556.1"/>
</dbReference>
<dbReference type="SMR" id="Q87A36"/>
<dbReference type="MEROPS" id="M48.002"/>
<dbReference type="GeneID" id="93905856"/>
<dbReference type="KEGG" id="xft:PD_1995"/>
<dbReference type="HOGENOM" id="CLU_042266_1_0_6"/>
<dbReference type="Proteomes" id="UP000002516">
    <property type="component" value="Chromosome"/>
</dbReference>
<dbReference type="GO" id="GO:0005886">
    <property type="term" value="C:plasma membrane"/>
    <property type="evidence" value="ECO:0007669"/>
    <property type="project" value="UniProtKB-SubCell"/>
</dbReference>
<dbReference type="GO" id="GO:0004222">
    <property type="term" value="F:metalloendopeptidase activity"/>
    <property type="evidence" value="ECO:0007669"/>
    <property type="project" value="UniProtKB-UniRule"/>
</dbReference>
<dbReference type="GO" id="GO:0008270">
    <property type="term" value="F:zinc ion binding"/>
    <property type="evidence" value="ECO:0007669"/>
    <property type="project" value="UniProtKB-UniRule"/>
</dbReference>
<dbReference type="GO" id="GO:0006508">
    <property type="term" value="P:proteolysis"/>
    <property type="evidence" value="ECO:0007669"/>
    <property type="project" value="UniProtKB-KW"/>
</dbReference>
<dbReference type="CDD" id="cd07335">
    <property type="entry name" value="M48B_HtpX_like"/>
    <property type="match status" value="1"/>
</dbReference>
<dbReference type="Gene3D" id="3.30.2010.10">
    <property type="entry name" value="Metalloproteases ('zincins'), catalytic domain"/>
    <property type="match status" value="1"/>
</dbReference>
<dbReference type="HAMAP" id="MF_00188">
    <property type="entry name" value="Pept_M48_protease_HtpX"/>
    <property type="match status" value="1"/>
</dbReference>
<dbReference type="InterPro" id="IPR050083">
    <property type="entry name" value="HtpX_protease"/>
</dbReference>
<dbReference type="InterPro" id="IPR022919">
    <property type="entry name" value="Pept_M48_protease_HtpX"/>
</dbReference>
<dbReference type="InterPro" id="IPR001915">
    <property type="entry name" value="Peptidase_M48"/>
</dbReference>
<dbReference type="NCBIfam" id="NF003965">
    <property type="entry name" value="PRK05457.1"/>
    <property type="match status" value="1"/>
</dbReference>
<dbReference type="PANTHER" id="PTHR43221">
    <property type="entry name" value="PROTEASE HTPX"/>
    <property type="match status" value="1"/>
</dbReference>
<dbReference type="PANTHER" id="PTHR43221:SF1">
    <property type="entry name" value="PROTEASE HTPX"/>
    <property type="match status" value="1"/>
</dbReference>
<dbReference type="Pfam" id="PF01435">
    <property type="entry name" value="Peptidase_M48"/>
    <property type="match status" value="1"/>
</dbReference>
<comment type="cofactor">
    <cofactor evidence="1">
        <name>Zn(2+)</name>
        <dbReference type="ChEBI" id="CHEBI:29105"/>
    </cofactor>
    <text evidence="1">Binds 1 zinc ion per subunit.</text>
</comment>
<comment type="subcellular location">
    <subcellularLocation>
        <location evidence="1">Cell inner membrane</location>
        <topology evidence="1">Multi-pass membrane protein</topology>
    </subcellularLocation>
</comment>
<comment type="similarity">
    <text evidence="1">Belongs to the peptidase M48B family.</text>
</comment>
<keyword id="KW-0997">Cell inner membrane</keyword>
<keyword id="KW-1003">Cell membrane</keyword>
<keyword id="KW-0378">Hydrolase</keyword>
<keyword id="KW-0472">Membrane</keyword>
<keyword id="KW-0479">Metal-binding</keyword>
<keyword id="KW-0482">Metalloprotease</keyword>
<keyword id="KW-0645">Protease</keyword>
<keyword id="KW-1185">Reference proteome</keyword>
<keyword id="KW-0812">Transmembrane</keyword>
<keyword id="KW-1133">Transmembrane helix</keyword>
<keyword id="KW-0862">Zinc</keyword>
<proteinExistence type="inferred from homology"/>
<sequence>MLTRIVLFAITNIAVLILASIVMSLLGVNPTQMSGLLVMALILGFGGSLISLLMSKAIAKHTTGAYVIEQPRNPSQRWLLDTVRRQAEIVGIGMPEVAIYEGPEINAFATGADRNNALVAVSTGLLQNMSQDEAEAVLGHEIAHVANGDMVTMALLQGVLNTFVIVLARVVGGFIDSLLSGNRGGGRGVAYYGIVLVLELLFGLFATIITMWFSRRREFRADEGGAYLAGRNKMIAALERLGINHGQSTLPTQVQAFGIYGGIGEGLRKLFLSHPPLSERIAALRMARE</sequence>
<accession>Q87A36</accession>
<gene>
    <name evidence="1" type="primary">htpX</name>
    <name type="ordered locus">PD_1995</name>
</gene>
<reference key="1">
    <citation type="journal article" date="2003" name="J. Bacteriol.">
        <title>Comparative analyses of the complete genome sequences of Pierce's disease and citrus variegated chlorosis strains of Xylella fastidiosa.</title>
        <authorList>
            <person name="Van Sluys M.A."/>
            <person name="de Oliveira M.C."/>
            <person name="Monteiro-Vitorello C.B."/>
            <person name="Miyaki C.Y."/>
            <person name="Furlan L.R."/>
            <person name="Camargo L.E.A."/>
            <person name="da Silva A.C.R."/>
            <person name="Moon D.H."/>
            <person name="Takita M.A."/>
            <person name="Lemos E.G.M."/>
            <person name="Machado M.A."/>
            <person name="Ferro M.I.T."/>
            <person name="da Silva F.R."/>
            <person name="Goldman M.H.S."/>
            <person name="Goldman G.H."/>
            <person name="Lemos M.V.F."/>
            <person name="El-Dorry H."/>
            <person name="Tsai S.M."/>
            <person name="Carrer H."/>
            <person name="Carraro D.M."/>
            <person name="de Oliveira R.C."/>
            <person name="Nunes L.R."/>
            <person name="Siqueira W.J."/>
            <person name="Coutinho L.L."/>
            <person name="Kimura E.T."/>
            <person name="Ferro E.S."/>
            <person name="Harakava R."/>
            <person name="Kuramae E.E."/>
            <person name="Marino C.L."/>
            <person name="Giglioti E."/>
            <person name="Abreu I.L."/>
            <person name="Alves L.M.C."/>
            <person name="do Amaral A.M."/>
            <person name="Baia G.S."/>
            <person name="Blanco S.R."/>
            <person name="Brito M.S."/>
            <person name="Cannavan F.S."/>
            <person name="Celestino A.V."/>
            <person name="da Cunha A.F."/>
            <person name="Fenille R.C."/>
            <person name="Ferro J.A."/>
            <person name="Formighieri E.F."/>
            <person name="Kishi L.T."/>
            <person name="Leoni S.G."/>
            <person name="Oliveira A.R."/>
            <person name="Rosa V.E. Jr."/>
            <person name="Sassaki F.T."/>
            <person name="Sena J.A.D."/>
            <person name="de Souza A.A."/>
            <person name="Truffi D."/>
            <person name="Tsukumo F."/>
            <person name="Yanai G.M."/>
            <person name="Zaros L.G."/>
            <person name="Civerolo E.L."/>
            <person name="Simpson A.J.G."/>
            <person name="Almeida N.F. Jr."/>
            <person name="Setubal J.C."/>
            <person name="Kitajima J.P."/>
        </authorList>
    </citation>
    <scope>NUCLEOTIDE SEQUENCE [LARGE SCALE GENOMIC DNA]</scope>
    <source>
        <strain>Temecula1 / ATCC 700964</strain>
    </source>
</reference>